<accession>Q4A729</accession>
<proteinExistence type="inferred from homology"/>
<comment type="function">
    <text evidence="1">Catalyzes the transfer of an acyl group from acyl-phosphate (acyl-PO(4)) to glycerol-3-phosphate (G3P) to form lysophosphatidic acid (LPA). This enzyme utilizes acyl-phosphate as fatty acyl donor, but not acyl-CoA or acyl-ACP.</text>
</comment>
<comment type="catalytic activity">
    <reaction evidence="1">
        <text>an acyl phosphate + sn-glycerol 3-phosphate = a 1-acyl-sn-glycero-3-phosphate + phosphate</text>
        <dbReference type="Rhea" id="RHEA:34075"/>
        <dbReference type="ChEBI" id="CHEBI:43474"/>
        <dbReference type="ChEBI" id="CHEBI:57597"/>
        <dbReference type="ChEBI" id="CHEBI:57970"/>
        <dbReference type="ChEBI" id="CHEBI:59918"/>
        <dbReference type="EC" id="2.3.1.275"/>
    </reaction>
</comment>
<comment type="pathway">
    <text evidence="1">Lipid metabolism; phospholipid metabolism.</text>
</comment>
<comment type="subunit">
    <text evidence="1">Probably interacts with PlsX.</text>
</comment>
<comment type="subcellular location">
    <subcellularLocation>
        <location evidence="1">Cell membrane</location>
        <topology evidence="1">Multi-pass membrane protein</topology>
    </subcellularLocation>
</comment>
<comment type="similarity">
    <text evidence="1">Belongs to the PlsY family.</text>
</comment>
<gene>
    <name evidence="1" type="primary">plsY</name>
    <name type="ordered locus">MS53_0020</name>
</gene>
<feature type="chain" id="PRO_0000188408" description="Glycerol-3-phosphate acyltransferase">
    <location>
        <begin position="1"/>
        <end position="224"/>
    </location>
</feature>
<feature type="transmembrane region" description="Helical" evidence="1">
    <location>
        <begin position="3"/>
        <end position="23"/>
    </location>
</feature>
<feature type="transmembrane region" description="Helical" evidence="1">
    <location>
        <begin position="54"/>
        <end position="74"/>
    </location>
</feature>
<feature type="transmembrane region" description="Helical" evidence="1">
    <location>
        <begin position="90"/>
        <end position="112"/>
    </location>
</feature>
<feature type="transmembrane region" description="Helical" evidence="1">
    <location>
        <begin position="127"/>
        <end position="147"/>
    </location>
</feature>
<feature type="transmembrane region" description="Helical" evidence="1">
    <location>
        <begin position="152"/>
        <end position="172"/>
    </location>
</feature>
<feature type="transmembrane region" description="Helical" evidence="1">
    <location>
        <begin position="183"/>
        <end position="203"/>
    </location>
</feature>
<evidence type="ECO:0000255" key="1">
    <source>
        <dbReference type="HAMAP-Rule" id="MF_01043"/>
    </source>
</evidence>
<protein>
    <recommendedName>
        <fullName evidence="1">Glycerol-3-phosphate acyltransferase</fullName>
    </recommendedName>
    <alternativeName>
        <fullName evidence="1">Acyl-PO4 G3P acyltransferase</fullName>
    </alternativeName>
    <alternativeName>
        <fullName evidence="1">Acyl-phosphate--glycerol-3-phosphate acyltransferase</fullName>
    </alternativeName>
    <alternativeName>
        <fullName evidence="1">G3P acyltransferase</fullName>
        <shortName evidence="1">GPAT</shortName>
        <ecNumber evidence="1">2.3.1.275</ecNumber>
    </alternativeName>
    <alternativeName>
        <fullName evidence="1">Lysophosphatidic acid synthase</fullName>
        <shortName evidence="1">LPA synthase</shortName>
    </alternativeName>
</protein>
<reference key="1">
    <citation type="journal article" date="2005" name="J. Bacteriol.">
        <title>Swine and poultry pathogens: the complete genome sequences of two strains of Mycoplasma hyopneumoniae and a strain of Mycoplasma synoviae.</title>
        <authorList>
            <person name="Vasconcelos A.T.R."/>
            <person name="Ferreira H.B."/>
            <person name="Bizarro C.V."/>
            <person name="Bonatto S.L."/>
            <person name="Carvalho M.O."/>
            <person name="Pinto P.M."/>
            <person name="Almeida D.F."/>
            <person name="Almeida L.G.P."/>
            <person name="Almeida R."/>
            <person name="Alves-Junior L."/>
            <person name="Assuncao E.N."/>
            <person name="Azevedo V.A.C."/>
            <person name="Bogo M.R."/>
            <person name="Brigido M.M."/>
            <person name="Brocchi M."/>
            <person name="Burity H.A."/>
            <person name="Camargo A.A."/>
            <person name="Camargo S.S."/>
            <person name="Carepo M.S."/>
            <person name="Carraro D.M."/>
            <person name="de Mattos Cascardo J.C."/>
            <person name="Castro L.A."/>
            <person name="Cavalcanti G."/>
            <person name="Chemale G."/>
            <person name="Collevatti R.G."/>
            <person name="Cunha C.W."/>
            <person name="Dallagiovanna B."/>
            <person name="Dambros B.P."/>
            <person name="Dellagostin O.A."/>
            <person name="Falcao C."/>
            <person name="Fantinatti-Garboggini F."/>
            <person name="Felipe M.S.S."/>
            <person name="Fiorentin L."/>
            <person name="Franco G.R."/>
            <person name="Freitas N.S.A."/>
            <person name="Frias D."/>
            <person name="Grangeiro T.B."/>
            <person name="Grisard E.C."/>
            <person name="Guimaraes C.T."/>
            <person name="Hungria M."/>
            <person name="Jardim S.N."/>
            <person name="Krieger M.A."/>
            <person name="Laurino J.P."/>
            <person name="Lima L.F.A."/>
            <person name="Lopes M.I."/>
            <person name="Loreto E.L.S."/>
            <person name="Madeira H.M.F."/>
            <person name="Manfio G.P."/>
            <person name="Maranhao A.Q."/>
            <person name="Martinkovics C.T."/>
            <person name="Medeiros S.R.B."/>
            <person name="Moreira M.A.M."/>
            <person name="Neiva M."/>
            <person name="Ramalho-Neto C.E."/>
            <person name="Nicolas M.F."/>
            <person name="Oliveira S.C."/>
            <person name="Paixao R.F.C."/>
            <person name="Pedrosa F.O."/>
            <person name="Pena S.D.J."/>
            <person name="Pereira M."/>
            <person name="Pereira-Ferrari L."/>
            <person name="Piffer I."/>
            <person name="Pinto L.S."/>
            <person name="Potrich D.P."/>
            <person name="Salim A.C.M."/>
            <person name="Santos F.R."/>
            <person name="Schmitt R."/>
            <person name="Schneider M.P.C."/>
            <person name="Schrank A."/>
            <person name="Schrank I.S."/>
            <person name="Schuck A.F."/>
            <person name="Seuanez H.N."/>
            <person name="Silva D.W."/>
            <person name="Silva R."/>
            <person name="Silva S.C."/>
            <person name="Soares C.M.A."/>
            <person name="Souza K.R.L."/>
            <person name="Souza R.C."/>
            <person name="Staats C.C."/>
            <person name="Steffens M.B.R."/>
            <person name="Teixeira S.M.R."/>
            <person name="Urmenyi T.P."/>
            <person name="Vainstein M.H."/>
            <person name="Zuccherato L.W."/>
            <person name="Simpson A.J.G."/>
            <person name="Zaha A."/>
        </authorList>
    </citation>
    <scope>NUCLEOTIDE SEQUENCE [LARGE SCALE GENOMIC DNA]</scope>
    <source>
        <strain>53</strain>
    </source>
</reference>
<keyword id="KW-1003">Cell membrane</keyword>
<keyword id="KW-0444">Lipid biosynthesis</keyword>
<keyword id="KW-0443">Lipid metabolism</keyword>
<keyword id="KW-0472">Membrane</keyword>
<keyword id="KW-0594">Phospholipid biosynthesis</keyword>
<keyword id="KW-1208">Phospholipid metabolism</keyword>
<keyword id="KW-1185">Reference proteome</keyword>
<keyword id="KW-0808">Transferase</keyword>
<keyword id="KW-0812">Transmembrane</keyword>
<keyword id="KW-1133">Transmembrane helix</keyword>
<dbReference type="EC" id="2.3.1.275" evidence="1"/>
<dbReference type="EMBL" id="AE017245">
    <property type="protein sequence ID" value="AAZ43442.2"/>
    <property type="molecule type" value="Genomic_DNA"/>
</dbReference>
<dbReference type="RefSeq" id="WP_041351804.1">
    <property type="nucleotide sequence ID" value="NC_007294.1"/>
</dbReference>
<dbReference type="SMR" id="Q4A729"/>
<dbReference type="STRING" id="262723.MS53_0020"/>
<dbReference type="KEGG" id="msy:MS53_0020"/>
<dbReference type="eggNOG" id="COG0344">
    <property type="taxonomic scope" value="Bacteria"/>
</dbReference>
<dbReference type="HOGENOM" id="CLU_081254_4_0_14"/>
<dbReference type="OrthoDB" id="9777124at2"/>
<dbReference type="UniPathway" id="UPA00085"/>
<dbReference type="Proteomes" id="UP000000549">
    <property type="component" value="Chromosome"/>
</dbReference>
<dbReference type="GO" id="GO:0005886">
    <property type="term" value="C:plasma membrane"/>
    <property type="evidence" value="ECO:0007669"/>
    <property type="project" value="UniProtKB-SubCell"/>
</dbReference>
<dbReference type="GO" id="GO:0043772">
    <property type="term" value="F:acyl-phosphate glycerol-3-phosphate acyltransferase activity"/>
    <property type="evidence" value="ECO:0007669"/>
    <property type="project" value="UniProtKB-UniRule"/>
</dbReference>
<dbReference type="GO" id="GO:0008654">
    <property type="term" value="P:phospholipid biosynthetic process"/>
    <property type="evidence" value="ECO:0007669"/>
    <property type="project" value="UniProtKB-UniRule"/>
</dbReference>
<dbReference type="HAMAP" id="MF_01043">
    <property type="entry name" value="PlsY"/>
    <property type="match status" value="1"/>
</dbReference>
<dbReference type="InterPro" id="IPR003811">
    <property type="entry name" value="G3P_acylTferase_PlsY"/>
</dbReference>
<dbReference type="NCBIfam" id="TIGR00023">
    <property type="entry name" value="glycerol-3-phosphate 1-O-acyltransferase PlsY"/>
    <property type="match status" value="1"/>
</dbReference>
<dbReference type="PANTHER" id="PTHR30309:SF0">
    <property type="entry name" value="GLYCEROL-3-PHOSPHATE ACYLTRANSFERASE-RELATED"/>
    <property type="match status" value="1"/>
</dbReference>
<dbReference type="PANTHER" id="PTHR30309">
    <property type="entry name" value="INNER MEMBRANE PROTEIN YGIH"/>
    <property type="match status" value="1"/>
</dbReference>
<dbReference type="Pfam" id="PF02660">
    <property type="entry name" value="G3P_acyltransf"/>
    <property type="match status" value="1"/>
</dbReference>
<dbReference type="SMART" id="SM01207">
    <property type="entry name" value="G3P_acyltransf"/>
    <property type="match status" value="1"/>
</dbReference>
<name>PLSY_MYCS5</name>
<sequence>MEIFLSIAINILIFWIGYLIGSLNASIIVGKLFYKKDVREFHSKNAGATNSLRVFGYKVAIVILFIDIFKVVFATYFVRIVFPFVFSPKLYFYIPLIAGLAAQIGQAYPIYFKFRGGKGVAATVGLLISINVLLWPIAGVFFFLLLFKTKYVSLSSLLTTLIMIGFISIPWMSQGVLSYATSGFGQFWVNIIIYLFAAALIFWKHRENIKRLLSKTENKMKFKK</sequence>
<organism>
    <name type="scientific">Mycoplasmopsis synoviae (strain 53)</name>
    <name type="common">Mycoplasma synoviae</name>
    <dbReference type="NCBI Taxonomy" id="262723"/>
    <lineage>
        <taxon>Bacteria</taxon>
        <taxon>Bacillati</taxon>
        <taxon>Mycoplasmatota</taxon>
        <taxon>Mycoplasmoidales</taxon>
        <taxon>Metamycoplasmataceae</taxon>
        <taxon>Mycoplasmopsis</taxon>
    </lineage>
</organism>